<sequence length="533" mass="58083">MTSEQFPWLTGIILLPILAALPIPLIPDKDGRTVRWYSLFVGLADFALMVYAFWQHFDRSEAGLQMVEKISWVPQIGLNWSLAVDGLSMPLVLLTGLVTTLAILASWNINVKPKLFHFLLLLLYGAQIAVFTAQDMMLFFLVWELELVPVYLLISIWGGPKRQYAATKFILYTALASLFILVAGLALAFSGDSFSFDLTELGLKDYSLWLELLAYAGFLIAFGVKLSIFPLHTWLPDAHGEANAPGSMLLAGILLKMGGYALIRFNVQLLPEAHIRFAPVLAVLGIVNIIYGALNAFAQDNLKRKIAYSSISHMGFVLLGIAAYNSLGLNGALLQMLSHGLIAAALFFLAGVAYERTHTLQIPQISGLAKQMPITFALFTVTAMASLALPGMSGFVSELTVFLGFTDSVYSSGFRTVTILLAAVGLVLTPMYLLSMLRRIFYGTYNIQLGQVLADAKPRELFVAFCLLVPTLAIGFYPKLTTQVYDVTTTALAAQVQSNLPVVALAQQGSLYSQMPAAEEATAVSMTAPPVID</sequence>
<keyword id="KW-0472">Membrane</keyword>
<keyword id="KW-0520">NAD</keyword>
<keyword id="KW-0521">NADP</keyword>
<keyword id="KW-0618">Plastoquinone</keyword>
<keyword id="KW-0874">Quinone</keyword>
<keyword id="KW-1185">Reference proteome</keyword>
<keyword id="KW-0793">Thylakoid</keyword>
<keyword id="KW-1278">Translocase</keyword>
<keyword id="KW-0812">Transmembrane</keyword>
<keyword id="KW-1133">Transmembrane helix</keyword>
<evidence type="ECO:0000255" key="1">
    <source>
        <dbReference type="HAMAP-Rule" id="MF_00491"/>
    </source>
</evidence>
<dbReference type="EC" id="7.1.1.-" evidence="1"/>
<dbReference type="EMBL" id="CP000100">
    <property type="protein sequence ID" value="ABB57469.1"/>
    <property type="molecule type" value="Genomic_DNA"/>
</dbReference>
<dbReference type="RefSeq" id="WP_011242430.1">
    <property type="nucleotide sequence ID" value="NZ_JACJTX010000004.1"/>
</dbReference>
<dbReference type="SMR" id="Q31NA0"/>
<dbReference type="STRING" id="1140.Synpcc7942_1439"/>
<dbReference type="PaxDb" id="1140-Synpcc7942_1439"/>
<dbReference type="KEGG" id="syf:Synpcc7942_1439"/>
<dbReference type="eggNOG" id="COG1008">
    <property type="taxonomic scope" value="Bacteria"/>
</dbReference>
<dbReference type="HOGENOM" id="CLU_007100_4_4_3"/>
<dbReference type="OrthoDB" id="9811718at2"/>
<dbReference type="BioCyc" id="MetaCyc:SYNPCC7942_1439-MONOMER"/>
<dbReference type="BioCyc" id="SYNEL:SYNPCC7942_1439-MONOMER"/>
<dbReference type="Proteomes" id="UP000889800">
    <property type="component" value="Chromosome"/>
</dbReference>
<dbReference type="GO" id="GO:0031676">
    <property type="term" value="C:plasma membrane-derived thylakoid membrane"/>
    <property type="evidence" value="ECO:0007669"/>
    <property type="project" value="UniProtKB-SubCell"/>
</dbReference>
<dbReference type="GO" id="GO:0008137">
    <property type="term" value="F:NADH dehydrogenase (ubiquinone) activity"/>
    <property type="evidence" value="ECO:0007669"/>
    <property type="project" value="InterPro"/>
</dbReference>
<dbReference type="GO" id="GO:0048039">
    <property type="term" value="F:ubiquinone binding"/>
    <property type="evidence" value="ECO:0007669"/>
    <property type="project" value="TreeGrafter"/>
</dbReference>
<dbReference type="GO" id="GO:0042773">
    <property type="term" value="P:ATP synthesis coupled electron transport"/>
    <property type="evidence" value="ECO:0007669"/>
    <property type="project" value="InterPro"/>
</dbReference>
<dbReference type="GO" id="GO:0015990">
    <property type="term" value="P:electron transport coupled proton transport"/>
    <property type="evidence" value="ECO:0007669"/>
    <property type="project" value="TreeGrafter"/>
</dbReference>
<dbReference type="HAMAP" id="MF_00491">
    <property type="entry name" value="NDH1_NuoM"/>
    <property type="match status" value="1"/>
</dbReference>
<dbReference type="InterPro" id="IPR022997">
    <property type="entry name" value="NADH_Q_OxRdtase_chain4"/>
</dbReference>
<dbReference type="InterPro" id="IPR010227">
    <property type="entry name" value="NADH_Q_OxRdtase_chainM/4"/>
</dbReference>
<dbReference type="InterPro" id="IPR003918">
    <property type="entry name" value="NADH_UbQ_OxRdtase"/>
</dbReference>
<dbReference type="InterPro" id="IPR001750">
    <property type="entry name" value="ND/Mrp_TM"/>
</dbReference>
<dbReference type="NCBIfam" id="TIGR01972">
    <property type="entry name" value="NDH_I_M"/>
    <property type="match status" value="1"/>
</dbReference>
<dbReference type="NCBIfam" id="NF009212">
    <property type="entry name" value="PRK12561.1"/>
    <property type="match status" value="1"/>
</dbReference>
<dbReference type="PANTHER" id="PTHR43507:SF21">
    <property type="entry name" value="NAD(P)H-QUINONE OXIDOREDUCTASE CHAIN 4, CHLOROPLASTIC"/>
    <property type="match status" value="1"/>
</dbReference>
<dbReference type="PANTHER" id="PTHR43507">
    <property type="entry name" value="NADH-UBIQUINONE OXIDOREDUCTASE CHAIN 4"/>
    <property type="match status" value="1"/>
</dbReference>
<dbReference type="Pfam" id="PF00361">
    <property type="entry name" value="Proton_antipo_M"/>
    <property type="match status" value="1"/>
</dbReference>
<dbReference type="PRINTS" id="PR01437">
    <property type="entry name" value="NUOXDRDTASE4"/>
</dbReference>
<accession>Q31NA0</accession>
<feature type="chain" id="PRO_0000343260" description="NAD(P)H-quinone oxidoreductase chain 4 1">
    <location>
        <begin position="1"/>
        <end position="533"/>
    </location>
</feature>
<feature type="transmembrane region" description="Helical" evidence="1">
    <location>
        <begin position="6"/>
        <end position="26"/>
    </location>
</feature>
<feature type="transmembrane region" description="Helical" evidence="1">
    <location>
        <begin position="37"/>
        <end position="57"/>
    </location>
</feature>
<feature type="transmembrane region" description="Helical" evidence="1">
    <location>
        <begin position="87"/>
        <end position="107"/>
    </location>
</feature>
<feature type="transmembrane region" description="Helical" evidence="1">
    <location>
        <begin position="113"/>
        <end position="133"/>
    </location>
</feature>
<feature type="transmembrane region" description="Helical" evidence="1">
    <location>
        <begin position="137"/>
        <end position="157"/>
    </location>
</feature>
<feature type="transmembrane region" description="Helical" evidence="1">
    <location>
        <begin position="169"/>
        <end position="189"/>
    </location>
</feature>
<feature type="transmembrane region" description="Helical" evidence="1">
    <location>
        <begin position="209"/>
        <end position="229"/>
    </location>
</feature>
<feature type="transmembrane region" description="Helical" evidence="1">
    <location>
        <begin position="243"/>
        <end position="263"/>
    </location>
</feature>
<feature type="transmembrane region" description="Helical" evidence="1">
    <location>
        <begin position="277"/>
        <end position="297"/>
    </location>
</feature>
<feature type="transmembrane region" description="Helical" evidence="1">
    <location>
        <begin position="311"/>
        <end position="331"/>
    </location>
</feature>
<feature type="transmembrane region" description="Helical" evidence="1">
    <location>
        <begin position="332"/>
        <end position="352"/>
    </location>
</feature>
<feature type="transmembrane region" description="Helical" evidence="1">
    <location>
        <begin position="376"/>
        <end position="396"/>
    </location>
</feature>
<feature type="transmembrane region" description="Helical" evidence="1">
    <location>
        <begin position="417"/>
        <end position="437"/>
    </location>
</feature>
<feature type="transmembrane region" description="Helical" evidence="1">
    <location>
        <begin position="461"/>
        <end position="481"/>
    </location>
</feature>
<name>NU4C1_SYNE7</name>
<gene>
    <name evidence="1" type="primary">ndhD1</name>
    <name type="ordered locus">Synpcc7942_1439</name>
</gene>
<reference key="1">
    <citation type="submission" date="2005-08" db="EMBL/GenBank/DDBJ databases">
        <title>Complete sequence of chromosome 1 of Synechococcus elongatus PCC 7942.</title>
        <authorList>
            <consortium name="US DOE Joint Genome Institute"/>
            <person name="Copeland A."/>
            <person name="Lucas S."/>
            <person name="Lapidus A."/>
            <person name="Barry K."/>
            <person name="Detter J.C."/>
            <person name="Glavina T."/>
            <person name="Hammon N."/>
            <person name="Israni S."/>
            <person name="Pitluck S."/>
            <person name="Schmutz J."/>
            <person name="Larimer F."/>
            <person name="Land M."/>
            <person name="Kyrpides N."/>
            <person name="Lykidis A."/>
            <person name="Golden S."/>
            <person name="Richardson P."/>
        </authorList>
    </citation>
    <scope>NUCLEOTIDE SEQUENCE [LARGE SCALE GENOMIC DNA]</scope>
    <source>
        <strain>ATCC 33912 / PCC 7942 / FACHB-805</strain>
    </source>
</reference>
<organism>
    <name type="scientific">Synechococcus elongatus (strain ATCC 33912 / PCC 7942 / FACHB-805)</name>
    <name type="common">Anacystis nidulans R2</name>
    <dbReference type="NCBI Taxonomy" id="1140"/>
    <lineage>
        <taxon>Bacteria</taxon>
        <taxon>Bacillati</taxon>
        <taxon>Cyanobacteriota</taxon>
        <taxon>Cyanophyceae</taxon>
        <taxon>Synechococcales</taxon>
        <taxon>Synechococcaceae</taxon>
        <taxon>Synechococcus</taxon>
    </lineage>
</organism>
<protein>
    <recommendedName>
        <fullName evidence="1">NAD(P)H-quinone oxidoreductase chain 4 1</fullName>
        <ecNumber evidence="1">7.1.1.-</ecNumber>
    </recommendedName>
    <alternativeName>
        <fullName evidence="1">NAD(P)H dehydrogenase I, chain 4 1</fullName>
    </alternativeName>
    <alternativeName>
        <fullName evidence="1">NDH-1, chain 4 1</fullName>
    </alternativeName>
</protein>
<proteinExistence type="inferred from homology"/>
<comment type="function">
    <text evidence="1">NDH-1 shuttles electrons from NAD(P)H, via FMN and iron-sulfur (Fe-S) centers, to quinones in the respiratory chain. The immediate electron acceptor for the enzyme in this species is believed to be plastoquinone. Couples the redox reaction to proton translocation (for every two electrons transferred, four hydrogen ions are translocated across the cytoplasmic membrane), and thus conserves the redox energy in a proton gradient.</text>
</comment>
<comment type="catalytic activity">
    <reaction evidence="1">
        <text>a plastoquinone + NADH + (n+1) H(+)(in) = a plastoquinol + NAD(+) + n H(+)(out)</text>
        <dbReference type="Rhea" id="RHEA:42608"/>
        <dbReference type="Rhea" id="RHEA-COMP:9561"/>
        <dbReference type="Rhea" id="RHEA-COMP:9562"/>
        <dbReference type="ChEBI" id="CHEBI:15378"/>
        <dbReference type="ChEBI" id="CHEBI:17757"/>
        <dbReference type="ChEBI" id="CHEBI:57540"/>
        <dbReference type="ChEBI" id="CHEBI:57945"/>
        <dbReference type="ChEBI" id="CHEBI:62192"/>
    </reaction>
</comment>
<comment type="catalytic activity">
    <reaction evidence="1">
        <text>a plastoquinone + NADPH + (n+1) H(+)(in) = a plastoquinol + NADP(+) + n H(+)(out)</text>
        <dbReference type="Rhea" id="RHEA:42612"/>
        <dbReference type="Rhea" id="RHEA-COMP:9561"/>
        <dbReference type="Rhea" id="RHEA-COMP:9562"/>
        <dbReference type="ChEBI" id="CHEBI:15378"/>
        <dbReference type="ChEBI" id="CHEBI:17757"/>
        <dbReference type="ChEBI" id="CHEBI:57783"/>
        <dbReference type="ChEBI" id="CHEBI:58349"/>
        <dbReference type="ChEBI" id="CHEBI:62192"/>
    </reaction>
</comment>
<comment type="subcellular location">
    <subcellularLocation>
        <location evidence="1">Cellular thylakoid membrane</location>
        <topology evidence="1">Multi-pass membrane protein</topology>
    </subcellularLocation>
</comment>
<comment type="similarity">
    <text evidence="1">Belongs to the complex I subunit 4 family.</text>
</comment>